<comment type="function">
    <text>Putative serine hydrolase.</text>
</comment>
<comment type="miscellaneous">
    <text>This gene may have been partially duplicated (see SERHL2).</text>
</comment>
<comment type="similarity">
    <text evidence="2">Belongs to the AB hydrolase superfamily.</text>
</comment>
<comment type="caution">
    <text evidence="2">Could be the product of a pseudogene.</text>
</comment>
<keyword id="KW-0378">Hydrolase</keyword>
<keyword id="KW-1185">Reference proteome</keyword>
<proteinExistence type="uncertain"/>
<name>SERHL_HUMAN</name>
<protein>
    <recommendedName>
        <fullName>Serine hydrolase-like protein</fullName>
        <shortName>SHL</shortName>
        <ecNumber>3.1.-.-</ecNumber>
    </recommendedName>
</protein>
<evidence type="ECO:0000255" key="1"/>
<evidence type="ECO:0000305" key="2"/>
<gene>
    <name type="primary">SERHL</name>
    <name type="synonym">SERHL2</name>
</gene>
<dbReference type="EC" id="3.1.-.-"/>
<dbReference type="EMBL" id="AL365513">
    <property type="protein sequence ID" value="CAB97209.1"/>
    <property type="molecule type" value="mRNA"/>
</dbReference>
<dbReference type="EMBL" id="AL022316">
    <property type="status" value="NOT_ANNOTATED_CDS"/>
    <property type="molecule type" value="Genomic_DNA"/>
</dbReference>
<dbReference type="EMBL" id="BC093888">
    <property type="protein sequence ID" value="AAH93888.1"/>
    <property type="molecule type" value="mRNA"/>
</dbReference>
<dbReference type="SMR" id="Q9NQF3"/>
<dbReference type="FunCoup" id="Q9NQF3">
    <property type="interactions" value="1"/>
</dbReference>
<dbReference type="IntAct" id="Q9NQF3">
    <property type="interactions" value="1"/>
</dbReference>
<dbReference type="ESTHER" id="human-SERHL2">
    <property type="family name" value="SERHL"/>
</dbReference>
<dbReference type="BioMuta" id="HGNC:14408"/>
<dbReference type="DMDM" id="21362940"/>
<dbReference type="MassIVE" id="Q9NQF3"/>
<dbReference type="PeptideAtlas" id="Q9NQF3"/>
<dbReference type="AGR" id="HGNC:14408"/>
<dbReference type="GeneCards" id="SERHL"/>
<dbReference type="HGNC" id="HGNC:14408">
    <property type="gene designation" value="SERHL"/>
</dbReference>
<dbReference type="MIM" id="607979">
    <property type="type" value="gene"/>
</dbReference>
<dbReference type="neXtProt" id="NX_Q9NQF3"/>
<dbReference type="InParanoid" id="Q9NQF3"/>
<dbReference type="PAN-GO" id="Q9NQF3">
    <property type="GO annotations" value="1 GO annotation based on evolutionary models"/>
</dbReference>
<dbReference type="PhylomeDB" id="Q9NQF3"/>
<dbReference type="PathwayCommons" id="Q9NQF3"/>
<dbReference type="SignaLink" id="Q9NQF3"/>
<dbReference type="ChiTaRS" id="SERHL">
    <property type="organism name" value="human"/>
</dbReference>
<dbReference type="Pharos" id="Q9NQF3">
    <property type="development level" value="Tdark"/>
</dbReference>
<dbReference type="PRO" id="PR:Q9NQF3"/>
<dbReference type="Proteomes" id="UP000005640">
    <property type="component" value="Unplaced"/>
</dbReference>
<dbReference type="RNAct" id="Q9NQF3">
    <property type="molecule type" value="protein"/>
</dbReference>
<dbReference type="GO" id="GO:0016787">
    <property type="term" value="F:hydrolase activity"/>
    <property type="evidence" value="ECO:0000318"/>
    <property type="project" value="GO_Central"/>
</dbReference>
<dbReference type="Gene3D" id="3.40.50.1820">
    <property type="entry name" value="alpha/beta hydrolase"/>
    <property type="match status" value="1"/>
</dbReference>
<dbReference type="InterPro" id="IPR000073">
    <property type="entry name" value="AB_hydrolase_1"/>
</dbReference>
<dbReference type="InterPro" id="IPR029058">
    <property type="entry name" value="AB_hydrolase_fold"/>
</dbReference>
<dbReference type="InterPro" id="IPR050266">
    <property type="entry name" value="AB_hydrolase_sf"/>
</dbReference>
<dbReference type="PANTHER" id="PTHR43798">
    <property type="entry name" value="MONOACYLGLYCEROL LIPASE"/>
    <property type="match status" value="1"/>
</dbReference>
<dbReference type="PANTHER" id="PTHR43798:SF14">
    <property type="entry name" value="SERINE HYDROLASE-LIKE PROTEIN DDB_G0286239"/>
    <property type="match status" value="1"/>
</dbReference>
<dbReference type="Pfam" id="PF00561">
    <property type="entry name" value="Abhydrolase_1"/>
    <property type="match status" value="1"/>
</dbReference>
<dbReference type="PRINTS" id="PR00111">
    <property type="entry name" value="ABHYDROLASE"/>
</dbReference>
<dbReference type="SUPFAM" id="SSF53474">
    <property type="entry name" value="alpha/beta-Hydrolases"/>
    <property type="match status" value="1"/>
</dbReference>
<feature type="chain" id="PRO_0000097665" description="Serine hydrolase-like protein">
    <location>
        <begin position="1"/>
        <end position="203"/>
    </location>
</feature>
<feature type="domain" description="AB hydrolase-1" evidence="1">
    <location>
        <begin position="33"/>
        <end position="145"/>
    </location>
</feature>
<feature type="active site" evidence="1">
    <location>
        <position position="108"/>
    </location>
</feature>
<feature type="sequence variant" id="VAR_056985" description="In dbSNP:rs3213549.">
    <original>E</original>
    <variation>K</variation>
    <location>
        <position position="3"/>
    </location>
</feature>
<accession>Q9NQF3</accession>
<accession>Q5JZ95</accession>
<accession>Q9UH21</accession>
<organism>
    <name type="scientific">Homo sapiens</name>
    <name type="common">Human</name>
    <dbReference type="NCBI Taxonomy" id="9606"/>
    <lineage>
        <taxon>Eukaryota</taxon>
        <taxon>Metazoa</taxon>
        <taxon>Chordata</taxon>
        <taxon>Craniata</taxon>
        <taxon>Vertebrata</taxon>
        <taxon>Euteleostomi</taxon>
        <taxon>Mammalia</taxon>
        <taxon>Eutheria</taxon>
        <taxon>Euarchontoglires</taxon>
        <taxon>Primates</taxon>
        <taxon>Haplorrhini</taxon>
        <taxon>Catarrhini</taxon>
        <taxon>Hominidae</taxon>
        <taxon>Homo</taxon>
    </lineage>
</organism>
<sequence length="203" mass="22471">MAENAAPGLISELKLAVPWGHIAAKAWGSLQGPPVLCLHGWLDNASSFDRLIPLLPQDFYYVAMDFGGHGLSSHYSPGVPYYLQTFVSEIRRVVAALKWNRFSILGHSFGGVVGGMFFCTFPEMVDKLILLDTPLFLLESDEMENLLTYKRRAIEHVLQVEASQEPSHVFSLKQLLQRQRTALTSSAGSCVRIPSGSCRPMSC</sequence>
<reference key="1">
    <citation type="journal article" date="2003" name="Genome Res.">
        <title>Reevaluating human gene annotation: a second-generation analysis of chromosome 22.</title>
        <authorList>
            <person name="Collins J.E."/>
            <person name="Goward M.E."/>
            <person name="Cole C.G."/>
            <person name="Smink L.J."/>
            <person name="Huckle E.J."/>
            <person name="Knowles S."/>
            <person name="Bye J.M."/>
            <person name="Beare D.M."/>
            <person name="Dunham I."/>
        </authorList>
    </citation>
    <scope>NUCLEOTIDE SEQUENCE [LARGE SCALE MRNA]</scope>
</reference>
<reference key="2">
    <citation type="journal article" date="1999" name="Nature">
        <title>The DNA sequence of human chromosome 22.</title>
        <authorList>
            <person name="Dunham I."/>
            <person name="Hunt A.R."/>
            <person name="Collins J.E."/>
            <person name="Bruskiewich R."/>
            <person name="Beare D.M."/>
            <person name="Clamp M."/>
            <person name="Smink L.J."/>
            <person name="Ainscough R."/>
            <person name="Almeida J.P."/>
            <person name="Babbage A.K."/>
            <person name="Bagguley C."/>
            <person name="Bailey J."/>
            <person name="Barlow K.F."/>
            <person name="Bates K.N."/>
            <person name="Beasley O.P."/>
            <person name="Bird C.P."/>
            <person name="Blakey S.E."/>
            <person name="Bridgeman A.M."/>
            <person name="Buck D."/>
            <person name="Burgess J."/>
            <person name="Burrill W.D."/>
            <person name="Burton J."/>
            <person name="Carder C."/>
            <person name="Carter N.P."/>
            <person name="Chen Y."/>
            <person name="Clark G."/>
            <person name="Clegg S.M."/>
            <person name="Cobley V.E."/>
            <person name="Cole C.G."/>
            <person name="Collier R.E."/>
            <person name="Connor R."/>
            <person name="Conroy D."/>
            <person name="Corby N.R."/>
            <person name="Coville G.J."/>
            <person name="Cox A.V."/>
            <person name="Davis J."/>
            <person name="Dawson E."/>
            <person name="Dhami P.D."/>
            <person name="Dockree C."/>
            <person name="Dodsworth S.J."/>
            <person name="Durbin R.M."/>
            <person name="Ellington A.G."/>
            <person name="Evans K.L."/>
            <person name="Fey J.M."/>
            <person name="Fleming K."/>
            <person name="French L."/>
            <person name="Garner A.A."/>
            <person name="Gilbert J.G.R."/>
            <person name="Goward M.E."/>
            <person name="Grafham D.V."/>
            <person name="Griffiths M.N.D."/>
            <person name="Hall C."/>
            <person name="Hall R.E."/>
            <person name="Hall-Tamlyn G."/>
            <person name="Heathcott R.W."/>
            <person name="Ho S."/>
            <person name="Holmes S."/>
            <person name="Hunt S.E."/>
            <person name="Jones M.C."/>
            <person name="Kershaw J."/>
            <person name="Kimberley A.M."/>
            <person name="King A."/>
            <person name="Laird G.K."/>
            <person name="Langford C.F."/>
            <person name="Leversha M.A."/>
            <person name="Lloyd C."/>
            <person name="Lloyd D.M."/>
            <person name="Martyn I.D."/>
            <person name="Mashreghi-Mohammadi M."/>
            <person name="Matthews L.H."/>
            <person name="Mccann O.T."/>
            <person name="Mcclay J."/>
            <person name="Mclaren S."/>
            <person name="McMurray A.A."/>
            <person name="Milne S.A."/>
            <person name="Mortimore B.J."/>
            <person name="Odell C.N."/>
            <person name="Pavitt R."/>
            <person name="Pearce A.V."/>
            <person name="Pearson D."/>
            <person name="Phillimore B.J.C.T."/>
            <person name="Phillips S.H."/>
            <person name="Plumb R.W."/>
            <person name="Ramsay H."/>
            <person name="Ramsey Y."/>
            <person name="Rogers L."/>
            <person name="Ross M.T."/>
            <person name="Scott C.E."/>
            <person name="Sehra H.K."/>
            <person name="Skuce C.D."/>
            <person name="Smalley S."/>
            <person name="Smith M.L."/>
            <person name="Soderlund C."/>
            <person name="Spragon L."/>
            <person name="Steward C.A."/>
            <person name="Sulston J.E."/>
            <person name="Swann R.M."/>
            <person name="Vaudin M."/>
            <person name="Wall M."/>
            <person name="Wallis J.M."/>
            <person name="Whiteley M.N."/>
            <person name="Willey D.L."/>
            <person name="Williams L."/>
            <person name="Williams S.A."/>
            <person name="Williamson H."/>
            <person name="Wilmer T.E."/>
            <person name="Wilming L."/>
            <person name="Wright C.L."/>
            <person name="Hubbard T."/>
            <person name="Bentley D.R."/>
            <person name="Beck S."/>
            <person name="Rogers J."/>
            <person name="Shimizu N."/>
            <person name="Minoshima S."/>
            <person name="Kawasaki K."/>
            <person name="Sasaki T."/>
            <person name="Asakawa S."/>
            <person name="Kudoh J."/>
            <person name="Shintani A."/>
            <person name="Shibuya K."/>
            <person name="Yoshizaki Y."/>
            <person name="Aoki N."/>
            <person name="Mitsuyama S."/>
            <person name="Roe B.A."/>
            <person name="Chen F."/>
            <person name="Chu L."/>
            <person name="Crabtree J."/>
            <person name="Deschamps S."/>
            <person name="Do A."/>
            <person name="Do T."/>
            <person name="Dorman A."/>
            <person name="Fang F."/>
            <person name="Fu Y."/>
            <person name="Hu P."/>
            <person name="Hua A."/>
            <person name="Kenton S."/>
            <person name="Lai H."/>
            <person name="Lao H.I."/>
            <person name="Lewis J."/>
            <person name="Lewis S."/>
            <person name="Lin S.-P."/>
            <person name="Loh P."/>
            <person name="Malaj E."/>
            <person name="Nguyen T."/>
            <person name="Pan H."/>
            <person name="Phan S."/>
            <person name="Qi S."/>
            <person name="Qian Y."/>
            <person name="Ray L."/>
            <person name="Ren Q."/>
            <person name="Shaull S."/>
            <person name="Sloan D."/>
            <person name="Song L."/>
            <person name="Wang Q."/>
            <person name="Wang Y."/>
            <person name="Wang Z."/>
            <person name="White J."/>
            <person name="Willingham D."/>
            <person name="Wu H."/>
            <person name="Yao Z."/>
            <person name="Zhan M."/>
            <person name="Zhang G."/>
            <person name="Chissoe S."/>
            <person name="Murray J."/>
            <person name="Miller N."/>
            <person name="Minx P."/>
            <person name="Fulton R."/>
            <person name="Johnson D."/>
            <person name="Bemis G."/>
            <person name="Bentley D."/>
            <person name="Bradshaw H."/>
            <person name="Bourne S."/>
            <person name="Cordes M."/>
            <person name="Du Z."/>
            <person name="Fulton L."/>
            <person name="Goela D."/>
            <person name="Graves T."/>
            <person name="Hawkins J."/>
            <person name="Hinds K."/>
            <person name="Kemp K."/>
            <person name="Latreille P."/>
            <person name="Layman D."/>
            <person name="Ozersky P."/>
            <person name="Rohlfing T."/>
            <person name="Scheet P."/>
            <person name="Walker C."/>
            <person name="Wamsley A."/>
            <person name="Wohldmann P."/>
            <person name="Pepin K."/>
            <person name="Nelson J."/>
            <person name="Korf I."/>
            <person name="Bedell J.A."/>
            <person name="Hillier L.W."/>
            <person name="Mardis E."/>
            <person name="Waterston R."/>
            <person name="Wilson R."/>
            <person name="Emanuel B.S."/>
            <person name="Shaikh T."/>
            <person name="Kurahashi H."/>
            <person name="Saitta S."/>
            <person name="Budarf M.L."/>
            <person name="McDermid H.E."/>
            <person name="Johnson A."/>
            <person name="Wong A.C.C."/>
            <person name="Morrow B.E."/>
            <person name="Edelmann L."/>
            <person name="Kim U.J."/>
            <person name="Shizuya H."/>
            <person name="Simon M.I."/>
            <person name="Dumanski J.P."/>
            <person name="Peyrard M."/>
            <person name="Kedra D."/>
            <person name="Seroussi E."/>
            <person name="Fransson I."/>
            <person name="Tapia I."/>
            <person name="Bruder C.E."/>
            <person name="O'Brien K.P."/>
            <person name="Wilkinson P."/>
            <person name="Bodenteich A."/>
            <person name="Hartman K."/>
            <person name="Hu X."/>
            <person name="Khan A.S."/>
            <person name="Lane L."/>
            <person name="Tilahun Y."/>
            <person name="Wright H."/>
        </authorList>
    </citation>
    <scope>NUCLEOTIDE SEQUENCE [LARGE SCALE GENOMIC DNA]</scope>
</reference>
<reference key="3">
    <citation type="journal article" date="2004" name="Genome Res.">
        <title>The status, quality, and expansion of the NIH full-length cDNA project: the Mammalian Gene Collection (MGC).</title>
        <authorList>
            <consortium name="The MGC Project Team"/>
        </authorList>
    </citation>
    <scope>NUCLEOTIDE SEQUENCE [LARGE SCALE MRNA]</scope>
    <source>
        <tissue>Brain</tissue>
    </source>
</reference>